<dbReference type="EMBL" id="AC122854">
    <property type="status" value="NOT_ANNOTATED_CDS"/>
    <property type="molecule type" value="Genomic_DNA"/>
</dbReference>
<dbReference type="EMBL" id="AC124366">
    <property type="status" value="NOT_ANNOTATED_CDS"/>
    <property type="molecule type" value="Genomic_DNA"/>
</dbReference>
<dbReference type="EMBL" id="AK015153">
    <property type="protein sequence ID" value="BAB29725.1"/>
    <property type="status" value="ALT_FRAME"/>
    <property type="molecule type" value="mRNA"/>
</dbReference>
<dbReference type="EMBL" id="AK015753">
    <property type="protein sequence ID" value="BAB29958.1"/>
    <property type="status" value="ALT_FRAME"/>
    <property type="molecule type" value="mRNA"/>
</dbReference>
<dbReference type="FunCoup" id="Q9D565">
    <property type="interactions" value="98"/>
</dbReference>
<dbReference type="STRING" id="10090.ENSMUSP00000091846"/>
<dbReference type="iPTMnet" id="Q9D565"/>
<dbReference type="PhosphoSitePlus" id="Q9D565"/>
<dbReference type="SwissPalm" id="Q9D565"/>
<dbReference type="PaxDb" id="10090-ENSMUSP00000128678"/>
<dbReference type="ProteomicsDB" id="297895">
    <molecule id="Q9D565-1"/>
</dbReference>
<dbReference type="ProteomicsDB" id="297896">
    <molecule id="Q9D565-2"/>
</dbReference>
<dbReference type="ProteomicsDB" id="297897">
    <molecule id="Q9D565-3"/>
</dbReference>
<dbReference type="Pumba" id="Q9D565"/>
<dbReference type="Antibodypedia" id="52507">
    <property type="antibodies" value="40 antibodies from 11 providers"/>
</dbReference>
<dbReference type="Ensembl" id="ENSMUST00000171939.8">
    <molecule id="Q9D565-1"/>
    <property type="protein sequence ID" value="ENSMUSP00000128678.2"/>
    <property type="gene ID" value="ENSMUSG00000026523.15"/>
</dbReference>
<dbReference type="AGR" id="MGI:1923070"/>
<dbReference type="MGI" id="MGI:1923070">
    <property type="gene designation" value="Wdr64"/>
</dbReference>
<dbReference type="VEuPathDB" id="HostDB:ENSMUSG00000026523"/>
<dbReference type="eggNOG" id="KOG0281">
    <property type="taxonomic scope" value="Eukaryota"/>
</dbReference>
<dbReference type="eggNOG" id="KOG0642">
    <property type="taxonomic scope" value="Eukaryota"/>
</dbReference>
<dbReference type="GeneTree" id="ENSGT00940000160037"/>
<dbReference type="InParanoid" id="Q9D565"/>
<dbReference type="OrthoDB" id="5980302at2759"/>
<dbReference type="PhylomeDB" id="Q9D565"/>
<dbReference type="TreeFam" id="TF324700"/>
<dbReference type="ChiTaRS" id="Wdr64">
    <property type="organism name" value="mouse"/>
</dbReference>
<dbReference type="PRO" id="PR:Q9D565"/>
<dbReference type="Proteomes" id="UP000000589">
    <property type="component" value="Chromosome 1"/>
</dbReference>
<dbReference type="RNAct" id="Q9D565">
    <property type="molecule type" value="protein"/>
</dbReference>
<dbReference type="Bgee" id="ENSMUSG00000026523">
    <property type="expression patterns" value="Expressed in seminiferous tubule of testis and 13 other cell types or tissues"/>
</dbReference>
<dbReference type="ExpressionAtlas" id="Q9D565">
    <property type="expression patterns" value="baseline and differential"/>
</dbReference>
<dbReference type="Gene3D" id="2.130.10.10">
    <property type="entry name" value="YVTN repeat-like/Quinoprotein amine dehydrogenase"/>
    <property type="match status" value="3"/>
</dbReference>
<dbReference type="InterPro" id="IPR051242">
    <property type="entry name" value="WD-EF-hand_domain"/>
</dbReference>
<dbReference type="InterPro" id="IPR015943">
    <property type="entry name" value="WD40/YVTN_repeat-like_dom_sf"/>
</dbReference>
<dbReference type="InterPro" id="IPR036322">
    <property type="entry name" value="WD40_repeat_dom_sf"/>
</dbReference>
<dbReference type="InterPro" id="IPR001680">
    <property type="entry name" value="WD40_rpt"/>
</dbReference>
<dbReference type="PANTHER" id="PTHR44324:SF2">
    <property type="entry name" value="WD REPEAT-CONTAINING PROTEIN 64"/>
    <property type="match status" value="1"/>
</dbReference>
<dbReference type="PANTHER" id="PTHR44324">
    <property type="entry name" value="WD40 REPEAT DOMAIN 95"/>
    <property type="match status" value="1"/>
</dbReference>
<dbReference type="Pfam" id="PF00400">
    <property type="entry name" value="WD40"/>
    <property type="match status" value="2"/>
</dbReference>
<dbReference type="SMART" id="SM00320">
    <property type="entry name" value="WD40"/>
    <property type="match status" value="9"/>
</dbReference>
<dbReference type="SUPFAM" id="SSF50978">
    <property type="entry name" value="WD40 repeat-like"/>
    <property type="match status" value="2"/>
</dbReference>
<dbReference type="PROSITE" id="PS00678">
    <property type="entry name" value="WD_REPEATS_1"/>
    <property type="match status" value="1"/>
</dbReference>
<dbReference type="PROSITE" id="PS50082">
    <property type="entry name" value="WD_REPEATS_2"/>
    <property type="match status" value="3"/>
</dbReference>
<dbReference type="PROSITE" id="PS50294">
    <property type="entry name" value="WD_REPEATS_REGION"/>
    <property type="match status" value="2"/>
</dbReference>
<gene>
    <name type="primary">Wdr64</name>
</gene>
<comment type="alternative products">
    <event type="alternative splicing"/>
    <isoform>
        <id>Q9D565-1</id>
        <name>1</name>
        <sequence type="displayed"/>
    </isoform>
    <isoform>
        <id>Q9D565-2</id>
        <name>2</name>
        <sequence type="described" ref="VSP_033511 VSP_033512"/>
    </isoform>
    <isoform>
        <id>Q9D565-3</id>
        <name>3</name>
        <sequence type="described" ref="VSP_033510"/>
    </isoform>
</comment>
<comment type="sequence caution" evidence="3">
    <conflict type="frameshift">
        <sequence resource="EMBL-CDS" id="BAB29725"/>
    </conflict>
</comment>
<comment type="sequence caution" evidence="3">
    <conflict type="frameshift">
        <sequence resource="EMBL-CDS" id="BAB29958"/>
    </conflict>
</comment>
<sequence length="1086" mass="123893">MDAKDEKRFNLALQINNFKASLVEFNKLVEQTTAQKKEERAGIFIPKEDSIDYDKFYTSVQQIFGPEVKNQDVKCFYRKLCNNPDAAFDWCEIFGYFSTDEDSLTSQMDEENLVFLVSRKQRIVIAGSRRRDVIKCIVKVPQLDLLITASQKGLITVFNSQDTSWITGCDYLGQLKRIVATTERTIIVWDYKAQGSSQEHYFVIKPMDHCLLCVCVVPLPDQLCRDDILLGDDGGFVNKFTVSSDDFGLKQAKTKKKLQTQVLDSKNFKSVKRKLHNDWVMKIRYIPALNCFGSCSLDSVHSLVLESLKRLEDNLPVREFAMPRGANSFCYCGKANVIVTGGDDKVLRLWHPNISTKPVGKLVGHMFSITEIVSNEKEQHVISLSSAKVFRVWDIQTLSVLQVFHDSQGGPGDMQIYSMVYDANHGMLITGSGVIDMYPLTRMIQDTKQVPHTHEREVNVTLYNKYFHQVLTVCSESVIKVWELETGLQIYQILDPHGLSIELTCAAIDESGYLFATGAYNGTVKIWDFGSGQEMKMMPEGKDWVEEEHGLMRLFFLKPQVKQQHLILALERNGTIKIIQGKEDDIFLTVIWELPDAMPYLQYGSHIVHLKMSTKERTMAIPFPDVELIVQKTSQQTNYSPIVDVDVNCIDVFQTEGYNLIACGTTNGMIILWNFIAASVKEIYRPEDCFSTDPELDPKRFRINDIMFLFRSPECVRRSSQDSICSSTQCDSSKGPQSSKGSKQSIHDADVKGEHTDMVGEQQSASRKQPVPISFVEPQPPLLVSAHEDGHLRLWTLEGKLIKDMLPFTKHSAISLTSLYTDSCCRVLLAGNVEGHVILCSISSFMDPPHDEKKFKQLLSWRAHSLEIIQVIYVEEKQLVLTASIDGSVRIWNSTSGHYCGYFGQRRMFDLSQTSDFILPCDVNEYPIEIKEESKFTEKTQKYEYPLIFDRERWKKMSSMSLLFKRPPLSPFEVQHDFKFFKSLSSPKIRRYALEGFLTENREAGIVFGSLPIYRVPSPTSLRFLPLIGSEVQRDSVEGVYMKKKHDKVKREEAPEMTEGSRRKSLKRNLVPQINLASSFFPTTPK</sequence>
<keyword id="KW-0025">Alternative splicing</keyword>
<keyword id="KW-1185">Reference proteome</keyword>
<keyword id="KW-0677">Repeat</keyword>
<keyword id="KW-0853">WD repeat</keyword>
<feature type="chain" id="PRO_0000333257" description="WD repeat-containing protein 64">
    <location>
        <begin position="1"/>
        <end position="1086"/>
    </location>
</feature>
<feature type="repeat" description="WD 1">
    <location>
        <begin position="129"/>
        <end position="168"/>
    </location>
</feature>
<feature type="repeat" description="WD 2">
    <location>
        <begin position="170"/>
        <end position="199"/>
    </location>
</feature>
<feature type="repeat" description="WD 3">
    <location>
        <begin position="321"/>
        <end position="360"/>
    </location>
</feature>
<feature type="repeat" description="WD 4">
    <location>
        <begin position="364"/>
        <end position="403"/>
    </location>
</feature>
<feature type="repeat" description="WD 5">
    <location>
        <begin position="411"/>
        <end position="448"/>
    </location>
</feature>
<feature type="repeat" description="WD 6">
    <location>
        <begin position="453"/>
        <end position="492"/>
    </location>
</feature>
<feature type="repeat" description="WD 7">
    <location>
        <begin position="498"/>
        <end position="537"/>
    </location>
</feature>
<feature type="repeat" description="WD 8">
    <location>
        <begin position="560"/>
        <end position="602"/>
    </location>
</feature>
<feature type="repeat" description="WD 9">
    <location>
        <begin position="642"/>
        <end position="683"/>
    </location>
</feature>
<feature type="repeat" description="WD 10">
    <location>
        <begin position="765"/>
        <end position="806"/>
    </location>
</feature>
<feature type="repeat" description="WD 11">
    <location>
        <begin position="809"/>
        <end position="850"/>
    </location>
</feature>
<feature type="repeat" description="WD 12">
    <location>
        <begin position="863"/>
        <end position="902"/>
    </location>
</feature>
<feature type="region of interest" description="Disordered" evidence="1">
    <location>
        <begin position="724"/>
        <end position="749"/>
    </location>
</feature>
<feature type="region of interest" description="Disordered" evidence="1">
    <location>
        <begin position="1047"/>
        <end position="1069"/>
    </location>
</feature>
<feature type="compositionally biased region" description="Low complexity" evidence="1">
    <location>
        <begin position="732"/>
        <end position="744"/>
    </location>
</feature>
<feature type="compositionally biased region" description="Basic and acidic residues" evidence="1">
    <location>
        <begin position="1049"/>
        <end position="1062"/>
    </location>
</feature>
<feature type="splice variant" id="VSP_033510" description="In isoform 3." evidence="2">
    <location>
        <begin position="581"/>
        <end position="639"/>
    </location>
</feature>
<feature type="splice variant" id="VSP_033511" description="In isoform 2." evidence="2">
    <original>WKKMSSMSL</original>
    <variation>FADMLWKVS</variation>
    <location>
        <begin position="954"/>
        <end position="962"/>
    </location>
</feature>
<feature type="splice variant" id="VSP_033512" description="In isoform 2." evidence="2">
    <location>
        <begin position="963"/>
        <end position="1086"/>
    </location>
</feature>
<feature type="sequence conflict" description="In Ref. 2; BAB29725." evidence="3" ref="2">
    <original>R</original>
    <variation>G</variation>
    <location>
        <position position="456"/>
    </location>
</feature>
<organism>
    <name type="scientific">Mus musculus</name>
    <name type="common">Mouse</name>
    <dbReference type="NCBI Taxonomy" id="10090"/>
    <lineage>
        <taxon>Eukaryota</taxon>
        <taxon>Metazoa</taxon>
        <taxon>Chordata</taxon>
        <taxon>Craniata</taxon>
        <taxon>Vertebrata</taxon>
        <taxon>Euteleostomi</taxon>
        <taxon>Mammalia</taxon>
        <taxon>Eutheria</taxon>
        <taxon>Euarchontoglires</taxon>
        <taxon>Glires</taxon>
        <taxon>Rodentia</taxon>
        <taxon>Myomorpha</taxon>
        <taxon>Muroidea</taxon>
        <taxon>Muridae</taxon>
        <taxon>Murinae</taxon>
        <taxon>Mus</taxon>
        <taxon>Mus</taxon>
    </lineage>
</organism>
<reference key="1">
    <citation type="journal article" date="2009" name="PLoS Biol.">
        <title>Lineage-specific biology revealed by a finished genome assembly of the mouse.</title>
        <authorList>
            <person name="Church D.M."/>
            <person name="Goodstadt L."/>
            <person name="Hillier L.W."/>
            <person name="Zody M.C."/>
            <person name="Goldstein S."/>
            <person name="She X."/>
            <person name="Bult C.J."/>
            <person name="Agarwala R."/>
            <person name="Cherry J.L."/>
            <person name="DiCuccio M."/>
            <person name="Hlavina W."/>
            <person name="Kapustin Y."/>
            <person name="Meric P."/>
            <person name="Maglott D."/>
            <person name="Birtle Z."/>
            <person name="Marques A.C."/>
            <person name="Graves T."/>
            <person name="Zhou S."/>
            <person name="Teague B."/>
            <person name="Potamousis K."/>
            <person name="Churas C."/>
            <person name="Place M."/>
            <person name="Herschleb J."/>
            <person name="Runnheim R."/>
            <person name="Forrest D."/>
            <person name="Amos-Landgraf J."/>
            <person name="Schwartz D.C."/>
            <person name="Cheng Z."/>
            <person name="Lindblad-Toh K."/>
            <person name="Eichler E.E."/>
            <person name="Ponting C.P."/>
        </authorList>
    </citation>
    <scope>NUCLEOTIDE SEQUENCE [LARGE SCALE GENOMIC DNA]</scope>
    <source>
        <strain>C57BL/6J</strain>
    </source>
</reference>
<reference key="2">
    <citation type="journal article" date="2005" name="Science">
        <title>The transcriptional landscape of the mammalian genome.</title>
        <authorList>
            <person name="Carninci P."/>
            <person name="Kasukawa T."/>
            <person name="Katayama S."/>
            <person name="Gough J."/>
            <person name="Frith M.C."/>
            <person name="Maeda N."/>
            <person name="Oyama R."/>
            <person name="Ravasi T."/>
            <person name="Lenhard B."/>
            <person name="Wells C."/>
            <person name="Kodzius R."/>
            <person name="Shimokawa K."/>
            <person name="Bajic V.B."/>
            <person name="Brenner S.E."/>
            <person name="Batalov S."/>
            <person name="Forrest A.R."/>
            <person name="Zavolan M."/>
            <person name="Davis M.J."/>
            <person name="Wilming L.G."/>
            <person name="Aidinis V."/>
            <person name="Allen J.E."/>
            <person name="Ambesi-Impiombato A."/>
            <person name="Apweiler R."/>
            <person name="Aturaliya R.N."/>
            <person name="Bailey T.L."/>
            <person name="Bansal M."/>
            <person name="Baxter L."/>
            <person name="Beisel K.W."/>
            <person name="Bersano T."/>
            <person name="Bono H."/>
            <person name="Chalk A.M."/>
            <person name="Chiu K.P."/>
            <person name="Choudhary V."/>
            <person name="Christoffels A."/>
            <person name="Clutterbuck D.R."/>
            <person name="Crowe M.L."/>
            <person name="Dalla E."/>
            <person name="Dalrymple B.P."/>
            <person name="de Bono B."/>
            <person name="Della Gatta G."/>
            <person name="di Bernardo D."/>
            <person name="Down T."/>
            <person name="Engstrom P."/>
            <person name="Fagiolini M."/>
            <person name="Faulkner G."/>
            <person name="Fletcher C.F."/>
            <person name="Fukushima T."/>
            <person name="Furuno M."/>
            <person name="Futaki S."/>
            <person name="Gariboldi M."/>
            <person name="Georgii-Hemming P."/>
            <person name="Gingeras T.R."/>
            <person name="Gojobori T."/>
            <person name="Green R.E."/>
            <person name="Gustincich S."/>
            <person name="Harbers M."/>
            <person name="Hayashi Y."/>
            <person name="Hensch T.K."/>
            <person name="Hirokawa N."/>
            <person name="Hill D."/>
            <person name="Huminiecki L."/>
            <person name="Iacono M."/>
            <person name="Ikeo K."/>
            <person name="Iwama A."/>
            <person name="Ishikawa T."/>
            <person name="Jakt M."/>
            <person name="Kanapin A."/>
            <person name="Katoh M."/>
            <person name="Kawasawa Y."/>
            <person name="Kelso J."/>
            <person name="Kitamura H."/>
            <person name="Kitano H."/>
            <person name="Kollias G."/>
            <person name="Krishnan S.P."/>
            <person name="Kruger A."/>
            <person name="Kummerfeld S.K."/>
            <person name="Kurochkin I.V."/>
            <person name="Lareau L.F."/>
            <person name="Lazarevic D."/>
            <person name="Lipovich L."/>
            <person name="Liu J."/>
            <person name="Liuni S."/>
            <person name="McWilliam S."/>
            <person name="Madan Babu M."/>
            <person name="Madera M."/>
            <person name="Marchionni L."/>
            <person name="Matsuda H."/>
            <person name="Matsuzawa S."/>
            <person name="Miki H."/>
            <person name="Mignone F."/>
            <person name="Miyake S."/>
            <person name="Morris K."/>
            <person name="Mottagui-Tabar S."/>
            <person name="Mulder N."/>
            <person name="Nakano N."/>
            <person name="Nakauchi H."/>
            <person name="Ng P."/>
            <person name="Nilsson R."/>
            <person name="Nishiguchi S."/>
            <person name="Nishikawa S."/>
            <person name="Nori F."/>
            <person name="Ohara O."/>
            <person name="Okazaki Y."/>
            <person name="Orlando V."/>
            <person name="Pang K.C."/>
            <person name="Pavan W.J."/>
            <person name="Pavesi G."/>
            <person name="Pesole G."/>
            <person name="Petrovsky N."/>
            <person name="Piazza S."/>
            <person name="Reed J."/>
            <person name="Reid J.F."/>
            <person name="Ring B.Z."/>
            <person name="Ringwald M."/>
            <person name="Rost B."/>
            <person name="Ruan Y."/>
            <person name="Salzberg S.L."/>
            <person name="Sandelin A."/>
            <person name="Schneider C."/>
            <person name="Schoenbach C."/>
            <person name="Sekiguchi K."/>
            <person name="Semple C.A."/>
            <person name="Seno S."/>
            <person name="Sessa L."/>
            <person name="Sheng Y."/>
            <person name="Shibata Y."/>
            <person name="Shimada H."/>
            <person name="Shimada K."/>
            <person name="Silva D."/>
            <person name="Sinclair B."/>
            <person name="Sperling S."/>
            <person name="Stupka E."/>
            <person name="Sugiura K."/>
            <person name="Sultana R."/>
            <person name="Takenaka Y."/>
            <person name="Taki K."/>
            <person name="Tammoja K."/>
            <person name="Tan S.L."/>
            <person name="Tang S."/>
            <person name="Taylor M.S."/>
            <person name="Tegner J."/>
            <person name="Teichmann S.A."/>
            <person name="Ueda H.R."/>
            <person name="van Nimwegen E."/>
            <person name="Verardo R."/>
            <person name="Wei C.L."/>
            <person name="Yagi K."/>
            <person name="Yamanishi H."/>
            <person name="Zabarovsky E."/>
            <person name="Zhu S."/>
            <person name="Zimmer A."/>
            <person name="Hide W."/>
            <person name="Bult C."/>
            <person name="Grimmond S.M."/>
            <person name="Teasdale R.D."/>
            <person name="Liu E.T."/>
            <person name="Brusic V."/>
            <person name="Quackenbush J."/>
            <person name="Wahlestedt C."/>
            <person name="Mattick J.S."/>
            <person name="Hume D.A."/>
            <person name="Kai C."/>
            <person name="Sasaki D."/>
            <person name="Tomaru Y."/>
            <person name="Fukuda S."/>
            <person name="Kanamori-Katayama M."/>
            <person name="Suzuki M."/>
            <person name="Aoki J."/>
            <person name="Arakawa T."/>
            <person name="Iida J."/>
            <person name="Imamura K."/>
            <person name="Itoh M."/>
            <person name="Kato T."/>
            <person name="Kawaji H."/>
            <person name="Kawagashira N."/>
            <person name="Kawashima T."/>
            <person name="Kojima M."/>
            <person name="Kondo S."/>
            <person name="Konno H."/>
            <person name="Nakano K."/>
            <person name="Ninomiya N."/>
            <person name="Nishio T."/>
            <person name="Okada M."/>
            <person name="Plessy C."/>
            <person name="Shibata K."/>
            <person name="Shiraki T."/>
            <person name="Suzuki S."/>
            <person name="Tagami M."/>
            <person name="Waki K."/>
            <person name="Watahiki A."/>
            <person name="Okamura-Oho Y."/>
            <person name="Suzuki H."/>
            <person name="Kawai J."/>
            <person name="Hayashizaki Y."/>
        </authorList>
    </citation>
    <scope>NUCLEOTIDE SEQUENCE [LARGE SCALE MRNA] OF 442-1086 (ISOFORM 2)</scope>
    <scope>NUCLEOTIDE SEQUENCE [LARGE SCALE MRNA] OF 456-951 (ISOFORM 3)</scope>
    <source>
        <strain>C57BL/6J</strain>
        <tissue>Testis</tissue>
    </source>
</reference>
<name>WDR64_MOUSE</name>
<protein>
    <recommendedName>
        <fullName>WD repeat-containing protein 64</fullName>
    </recommendedName>
</protein>
<proteinExistence type="evidence at transcript level"/>
<accession>Q9D565</accession>
<accession>Q9CUP8</accession>
<evidence type="ECO:0000256" key="1">
    <source>
        <dbReference type="SAM" id="MobiDB-lite"/>
    </source>
</evidence>
<evidence type="ECO:0000303" key="2">
    <source>
    </source>
</evidence>
<evidence type="ECO:0000305" key="3"/>